<comment type="function">
    <text evidence="1">Could be involved in insertion of integral membrane proteins into the membrane.</text>
</comment>
<comment type="subcellular location">
    <subcellularLocation>
        <location evidence="1">Cell inner membrane</location>
        <topology evidence="1">Peripheral membrane protein</topology>
        <orientation evidence="1">Cytoplasmic side</orientation>
    </subcellularLocation>
</comment>
<comment type="similarity">
    <text evidence="1">Belongs to the UPF0161 family.</text>
</comment>
<feature type="chain" id="PRO_0000171835" description="Putative membrane protein insertion efficiency factor">
    <location>
        <begin position="1"/>
        <end position="74"/>
    </location>
</feature>
<proteinExistence type="inferred from homology"/>
<organism>
    <name type="scientific">Leptospira interrogans serogroup Icterohaemorrhagiae serovar copenhageni (strain Fiocruz L1-130)</name>
    <dbReference type="NCBI Taxonomy" id="267671"/>
    <lineage>
        <taxon>Bacteria</taxon>
        <taxon>Pseudomonadati</taxon>
        <taxon>Spirochaetota</taxon>
        <taxon>Spirochaetia</taxon>
        <taxon>Leptospirales</taxon>
        <taxon>Leptospiraceae</taxon>
        <taxon>Leptospira</taxon>
    </lineage>
</organism>
<name>YIDD_LEPIC</name>
<keyword id="KW-0997">Cell inner membrane</keyword>
<keyword id="KW-1003">Cell membrane</keyword>
<keyword id="KW-0472">Membrane</keyword>
<protein>
    <recommendedName>
        <fullName evidence="1">Putative membrane protein insertion efficiency factor</fullName>
    </recommendedName>
</protein>
<gene>
    <name type="ordered locus">LIC_10156</name>
</gene>
<sequence length="74" mass="8590">MNRFVIQLIQLYKRLLSPLLPPACRFTPTCSEYAAQAFQEYGFFRALQLSIWRILRCNPLSRGFDDPLPPNTKG</sequence>
<reference key="1">
    <citation type="journal article" date="2004" name="J. Bacteriol.">
        <title>Comparative genomics of two Leptospira interrogans serovars reveals novel insights into physiology and pathogenesis.</title>
        <authorList>
            <person name="Nascimento A.L.T.O."/>
            <person name="Ko A.I."/>
            <person name="Martins E.A.L."/>
            <person name="Monteiro-Vitorello C.B."/>
            <person name="Ho P.L."/>
            <person name="Haake D.A."/>
            <person name="Verjovski-Almeida S."/>
            <person name="Hartskeerl R.A."/>
            <person name="Marques M.V."/>
            <person name="Oliveira M.C."/>
            <person name="Menck C.F.M."/>
            <person name="Leite L.C.C."/>
            <person name="Carrer H."/>
            <person name="Coutinho L.L."/>
            <person name="Degrave W.M."/>
            <person name="Dellagostin O.A."/>
            <person name="El-Dorry H."/>
            <person name="Ferro E.S."/>
            <person name="Ferro M.I.T."/>
            <person name="Furlan L.R."/>
            <person name="Gamberini M."/>
            <person name="Giglioti E.A."/>
            <person name="Goes-Neto A."/>
            <person name="Goldman G.H."/>
            <person name="Goldman M.H.S."/>
            <person name="Harakava R."/>
            <person name="Jeronimo S.M.B."/>
            <person name="Junqueira-de-Azevedo I.L.M."/>
            <person name="Kimura E.T."/>
            <person name="Kuramae E.E."/>
            <person name="Lemos E.G.M."/>
            <person name="Lemos M.V.F."/>
            <person name="Marino C.L."/>
            <person name="Nunes L.R."/>
            <person name="de Oliveira R.C."/>
            <person name="Pereira G.G."/>
            <person name="Reis M.S."/>
            <person name="Schriefer A."/>
            <person name="Siqueira W.J."/>
            <person name="Sommer P."/>
            <person name="Tsai S.M."/>
            <person name="Simpson A.J.G."/>
            <person name="Ferro J.A."/>
            <person name="Camargo L.E.A."/>
            <person name="Kitajima J.P."/>
            <person name="Setubal J.C."/>
            <person name="Van Sluys M.A."/>
        </authorList>
    </citation>
    <scope>NUCLEOTIDE SEQUENCE [LARGE SCALE GENOMIC DNA]</scope>
    <source>
        <strain>Fiocruz L1-130</strain>
    </source>
</reference>
<dbReference type="EMBL" id="AE016823">
    <property type="protein sequence ID" value="AAS68785.1"/>
    <property type="molecule type" value="Genomic_DNA"/>
</dbReference>
<dbReference type="KEGG" id="lic:LIC_10156"/>
<dbReference type="HOGENOM" id="CLU_144811_6_0_12"/>
<dbReference type="Proteomes" id="UP000007037">
    <property type="component" value="Chromosome I"/>
</dbReference>
<dbReference type="GO" id="GO:0005886">
    <property type="term" value="C:plasma membrane"/>
    <property type="evidence" value="ECO:0007669"/>
    <property type="project" value="UniProtKB-SubCell"/>
</dbReference>
<dbReference type="HAMAP" id="MF_00386">
    <property type="entry name" value="UPF0161_YidD"/>
    <property type="match status" value="1"/>
</dbReference>
<dbReference type="InterPro" id="IPR002696">
    <property type="entry name" value="Membr_insert_effic_factor_YidD"/>
</dbReference>
<dbReference type="NCBIfam" id="TIGR00278">
    <property type="entry name" value="membrane protein insertion efficiency factor YidD"/>
    <property type="match status" value="1"/>
</dbReference>
<dbReference type="PANTHER" id="PTHR33383">
    <property type="entry name" value="MEMBRANE PROTEIN INSERTION EFFICIENCY FACTOR-RELATED"/>
    <property type="match status" value="1"/>
</dbReference>
<dbReference type="PANTHER" id="PTHR33383:SF1">
    <property type="entry name" value="MEMBRANE PROTEIN INSERTION EFFICIENCY FACTOR-RELATED"/>
    <property type="match status" value="1"/>
</dbReference>
<dbReference type="Pfam" id="PF01809">
    <property type="entry name" value="YidD"/>
    <property type="match status" value="1"/>
</dbReference>
<dbReference type="SMART" id="SM01234">
    <property type="entry name" value="Haemolytic"/>
    <property type="match status" value="1"/>
</dbReference>
<evidence type="ECO:0000255" key="1">
    <source>
        <dbReference type="HAMAP-Rule" id="MF_00386"/>
    </source>
</evidence>
<accession>Q72VY9</accession>